<evidence type="ECO:0000255" key="1">
    <source>
        <dbReference type="HAMAP-Rule" id="MF_04024"/>
    </source>
</evidence>
<evidence type="ECO:0000269" key="2">
    <source>
    </source>
</evidence>
<evidence type="ECO:0000269" key="3">
    <source>
    </source>
</evidence>
<evidence type="ECO:0000269" key="4">
    <source>
    </source>
</evidence>
<evidence type="ECO:0000269" key="5">
    <source>
    </source>
</evidence>
<evidence type="ECO:0000269" key="6">
    <source>
    </source>
</evidence>
<evidence type="ECO:0000269" key="7">
    <source>
    </source>
</evidence>
<evidence type="ECO:0000269" key="8">
    <source>
    </source>
</evidence>
<evidence type="ECO:0000269" key="9">
    <source>
    </source>
</evidence>
<evidence type="ECO:0000269" key="10">
    <source>
    </source>
</evidence>
<evidence type="ECO:0000269" key="11">
    <source>
    </source>
</evidence>
<evidence type="ECO:0000269" key="12">
    <source>
    </source>
</evidence>
<evidence type="ECO:0007829" key="13">
    <source>
        <dbReference type="PDB" id="4ZXS"/>
    </source>
</evidence>
<comment type="function">
    <text evidence="1 4 6 7">Plays an essential role in virion nuclear egress, the first step of virion release from infected cell. Within the host nucleus, NEC1 interacts with the newly formed capsid through the vertexes and directs it to the inner nuclear membrane by associating with NEC2. Induces the budding of the capsid at the inner nuclear membrane as well as its envelopment into the perinuclear space. There, the NEC1/NEC2 complex promotes the fusion of the enveloped capsid with the outer nuclear membrane and the subsequent release of the viral capsid into the cytoplasm where it will reach the secondary budding sites in the host Golgi or trans-Golgi network.</text>
</comment>
<comment type="subunit">
    <text evidence="2 8 10 11 12">Forms a heterohexameric complex with NEC1. Interacts with glycoprotein D; this interaction recruits glycoprotein D and glycoprotein M to the inner nuclear membrane.</text>
</comment>
<comment type="interaction">
    <interactant intactId="EBI-7183680">
        <id>P10218</id>
    </interactant>
    <interactant intactId="EBI-351935">
        <id>P02545</id>
        <label>LMNA</label>
    </interactant>
    <organismsDiffer>true</organismsDiffer>
    <experiments>2</experiments>
</comment>
<comment type="subcellular location">
    <subcellularLocation>
        <location evidence="1 3 9">Host nucleus inner membrane</location>
        <topology evidence="1 3 9">Single-pass membrane protein</topology>
    </subcellularLocation>
    <text evidence="1">Also localizes at the transient membrane of perinuclear virions.</text>
</comment>
<comment type="PTM">
    <text evidence="5">Phosphorylated by viral kinase US3.</text>
</comment>
<comment type="similarity">
    <text evidence="1">Belongs to the herpesviridae NEC2 protein family.</text>
</comment>
<name>NEC2_HHV11</name>
<organismHost>
    <name type="scientific">Homo sapiens</name>
    <name type="common">Human</name>
    <dbReference type="NCBI Taxonomy" id="9606"/>
</organismHost>
<gene>
    <name evidence="1" type="primary">NEC2</name>
    <name type="ordered locus">UL34</name>
</gene>
<protein>
    <recommendedName>
        <fullName evidence="1">Nuclear egress protein 2</fullName>
    </recommendedName>
</protein>
<keyword id="KW-0002">3D-structure</keyword>
<keyword id="KW-1043">Host membrane</keyword>
<keyword id="KW-1048">Host nucleus</keyword>
<keyword id="KW-0426">Late protein</keyword>
<keyword id="KW-0472">Membrane</keyword>
<keyword id="KW-0597">Phosphoprotein</keyword>
<keyword id="KW-1185">Reference proteome</keyword>
<keyword id="KW-0812">Transmembrane</keyword>
<keyword id="KW-1133">Transmembrane helix</keyword>
<feature type="chain" id="PRO_0000116026" description="Nuclear egress protein 2">
    <location>
        <begin position="1"/>
        <end position="275"/>
    </location>
</feature>
<feature type="topological domain" description="Perinuclear space" evidence="1">
    <location>
        <begin position="1"/>
        <end position="251"/>
    </location>
</feature>
<feature type="transmembrane region" description="Helical" evidence="1">
    <location>
        <begin position="252"/>
        <end position="272"/>
    </location>
</feature>
<feature type="topological domain" description="Nuclear" evidence="1">
    <location>
        <begin position="273"/>
        <end position="275"/>
    </location>
</feature>
<feature type="region of interest" description="Interaction with NEC1">
    <location>
        <begin position="137"/>
        <end position="181"/>
    </location>
</feature>
<feature type="helix" evidence="13">
    <location>
        <begin position="15"/>
        <end position="26"/>
    </location>
</feature>
<feature type="strand" evidence="13">
    <location>
        <begin position="31"/>
        <end position="35"/>
    </location>
</feature>
<feature type="strand" evidence="13">
    <location>
        <begin position="43"/>
        <end position="45"/>
    </location>
</feature>
<feature type="strand" evidence="13">
    <location>
        <begin position="51"/>
        <end position="56"/>
    </location>
</feature>
<feature type="strand" evidence="13">
    <location>
        <begin position="61"/>
        <end position="64"/>
    </location>
</feature>
<feature type="helix" evidence="13">
    <location>
        <begin position="66"/>
        <end position="76"/>
    </location>
</feature>
<feature type="strand" evidence="13">
    <location>
        <begin position="84"/>
        <end position="89"/>
    </location>
</feature>
<feature type="strand" evidence="13">
    <location>
        <begin position="91"/>
        <end position="101"/>
    </location>
</feature>
<feature type="strand" evidence="13">
    <location>
        <begin position="117"/>
        <end position="120"/>
    </location>
</feature>
<feature type="strand" evidence="13">
    <location>
        <begin position="124"/>
        <end position="129"/>
    </location>
</feature>
<feature type="helix" evidence="13">
    <location>
        <begin position="130"/>
        <end position="139"/>
    </location>
</feature>
<feature type="strand" evidence="13">
    <location>
        <begin position="150"/>
        <end position="158"/>
    </location>
</feature>
<feature type="strand" evidence="13">
    <location>
        <begin position="161"/>
        <end position="170"/>
    </location>
</feature>
<accession>P10218</accession>
<sequence>MAGLGKPYTGHPGDAFEGLVQRIRLIVPSTLRGGDGEAGPYSPSSLPSRCAFQFHGHDGSDESFPIEYVLRLMNDWAEVPCNPYLRIQNTGVSVLFQGFFHRPHNAPGGAITPERTNVILGSTETTGLSLGDLDTIKGRLGLDARPMMASMWISCFVRMPRVQLAFRFMGPEDAGRTRRILCRAAEQAITRRRRTRRSREAYGAEAGLGVAGTGFRARGDGFGPLPLLTQGPSRPWHQALRGLKHLRIGPPALVLAAGLVLGAAIWWVVGAGARL</sequence>
<proteinExistence type="evidence at protein level"/>
<dbReference type="EMBL" id="X14112">
    <property type="protein sequence ID" value="CAA32309.1"/>
    <property type="molecule type" value="Genomic_DNA"/>
</dbReference>
<dbReference type="PIR" id="G30085">
    <property type="entry name" value="WMBEH4"/>
</dbReference>
<dbReference type="RefSeq" id="YP_009137109.1">
    <property type="nucleotide sequence ID" value="NC_001806.2"/>
</dbReference>
<dbReference type="PDB" id="4ZXS">
    <property type="method" value="X-ray"/>
    <property type="resolution" value="2.77 A"/>
    <property type="chains" value="A/C=15-185"/>
</dbReference>
<dbReference type="PDB" id="8G6D">
    <property type="method" value="X-ray"/>
    <property type="resolution" value="3.92 A"/>
    <property type="chains" value="A/C/E/G/I/K=15-185"/>
</dbReference>
<dbReference type="PDBsum" id="4ZXS"/>
<dbReference type="PDBsum" id="8G6D"/>
<dbReference type="EMDB" id="EMD-40223"/>
<dbReference type="EMDB" id="EMD-40224"/>
<dbReference type="EMDB" id="EMD-40225"/>
<dbReference type="SMR" id="P10218"/>
<dbReference type="BioGRID" id="971400">
    <property type="interactions" value="1"/>
</dbReference>
<dbReference type="IntAct" id="P10218">
    <property type="interactions" value="1"/>
</dbReference>
<dbReference type="MINT" id="P10218"/>
<dbReference type="DNASU" id="2703355"/>
<dbReference type="GeneID" id="2703355"/>
<dbReference type="KEGG" id="vg:2703355"/>
<dbReference type="EvolutionaryTrace" id="P10218"/>
<dbReference type="Proteomes" id="UP000009294">
    <property type="component" value="Segment"/>
</dbReference>
<dbReference type="GO" id="GO:0044201">
    <property type="term" value="C:host cell nuclear inner membrane"/>
    <property type="evidence" value="ECO:0007669"/>
    <property type="project" value="UniProtKB-SubCell"/>
</dbReference>
<dbReference type="GO" id="GO:0016020">
    <property type="term" value="C:membrane"/>
    <property type="evidence" value="ECO:0007669"/>
    <property type="project" value="UniProtKB-KW"/>
</dbReference>
<dbReference type="GO" id="GO:0046802">
    <property type="term" value="P:exit of virus from host cell nucleus by nuclear egress"/>
    <property type="evidence" value="ECO:0000314"/>
    <property type="project" value="UniProtKB"/>
</dbReference>
<dbReference type="GO" id="GO:0046765">
    <property type="term" value="P:viral budding from nuclear membrane"/>
    <property type="evidence" value="ECO:0000314"/>
    <property type="project" value="UniProtKB"/>
</dbReference>
<dbReference type="HAMAP" id="MF_04024">
    <property type="entry name" value="HSV_NEC2"/>
    <property type="match status" value="1"/>
</dbReference>
<dbReference type="InterPro" id="IPR007626">
    <property type="entry name" value="Herpesvirus_viron_egress-type"/>
</dbReference>
<dbReference type="Pfam" id="PF04541">
    <property type="entry name" value="Herpes_U34"/>
    <property type="match status" value="1"/>
</dbReference>
<reference key="1">
    <citation type="journal article" date="1988" name="J. Gen. Virol.">
        <title>The complete DNA sequence of the long unique region in the genome of herpes simplex virus type 1.</title>
        <authorList>
            <person name="McGeoch D.J."/>
            <person name="Dalrymple M.A."/>
            <person name="Davison A.J."/>
            <person name="Dolan A."/>
            <person name="Frame M.C."/>
            <person name="McNab D."/>
            <person name="Perry L.J."/>
            <person name="Scott J.E."/>
            <person name="Taylor P."/>
        </authorList>
    </citation>
    <scope>NUCLEOTIDE SEQUENCE [GENOMIC DNA]</scope>
</reference>
<reference key="2">
    <citation type="journal article" date="2001" name="J. Virol.">
        <title>U(L)31 and U(L)34 proteins of herpes simplex virus type 1 form a complex that accumulates at the nuclear rim and is required for envelopment of nucleocapsids.</title>
        <authorList>
            <person name="Reynolds A.E."/>
            <person name="Ryckman B.J."/>
            <person name="Baines J.D."/>
            <person name="Zhou Y."/>
            <person name="Liang L."/>
            <person name="Roller R.J."/>
        </authorList>
    </citation>
    <scope>INTERACTION WITH NEC1</scope>
</reference>
<reference key="3">
    <citation type="journal article" date="2002" name="J. Virol.">
        <title>Ultrastructural localization of the herpes simplex virus type 1 UL31, UL34, and US3 proteins suggests specific roles in primary envelopment and egress of nucleocapsids.</title>
        <authorList>
            <person name="Reynolds A.E."/>
            <person name="Wills E.G."/>
            <person name="Roller R.J."/>
            <person name="Ryckman B.J."/>
            <person name="Baines J.D."/>
        </authorList>
    </citation>
    <scope>SUBCELLULAR LOCATION</scope>
</reference>
<reference key="4">
    <citation type="journal article" date="2004" name="J. Virol.">
        <title>Conformational changes in the nuclear lamina induced by herpes simplex virus type 1 require genes U(L)31 and U(L)34.</title>
        <authorList>
            <person name="Reynolds A.E."/>
            <person name="Liang L."/>
            <person name="Baines J.D."/>
        </authorList>
    </citation>
    <scope>FUNCTION</scope>
</reference>
<reference key="5">
    <citation type="journal article" date="2003" name="J. Virol.">
        <title>Effects of charged cluster mutations on the function of herpes simplex virus type 1 UL34 protein.</title>
        <authorList>
            <person name="Bjerke S.L."/>
            <person name="Cowan J.M."/>
            <person name="Kerr J.K."/>
            <person name="Reynolds A.E."/>
            <person name="Baines J.D."/>
            <person name="Roller R.J."/>
        </authorList>
    </citation>
    <scope>FUNCTION</scope>
</reference>
<reference key="6">
    <citation type="journal article" date="2004" name="J. Virol.">
        <title>Herpes simplex virus type 1 primary envelopment: UL34 protein modification and the US3-UL34 catalytic relationship.</title>
        <authorList>
            <person name="Ryckman B.J."/>
            <person name="Roller R.J."/>
        </authorList>
    </citation>
    <scope>PHOSPHORYLATION</scope>
</reference>
<reference key="7">
    <citation type="journal article" date="2004" name="J. Virol.">
        <title>Herpes simplex virus 1 U(L)31 and U(L)34 gene products promote the late maturation of viral replication compartments to the nuclear periphery.</title>
        <authorList>
            <person name="Simpson-Holley M."/>
            <person name="Baines J."/>
            <person name="Roller R."/>
            <person name="Knipe D.M."/>
        </authorList>
    </citation>
    <scope>FUNCTION</scope>
</reference>
<reference key="8">
    <citation type="journal article" date="2005" name="J. Virol.">
        <title>Identification of an essential domain in the herpes simplex virus 1 UL34 protein that is necessary and sufficient to interact with UL31 protein.</title>
        <authorList>
            <person name="Liang L."/>
            <person name="Baines J.D."/>
        </authorList>
    </citation>
    <scope>INTERACTION WITH NEC1</scope>
</reference>
<reference key="9">
    <citation type="journal article" date="2006" name="J. Virol.">
        <title>Herpes simplex virus 1-encoded protein kinase UL13 phosphorylates viral Us3 protein kinase and regulates nuclear localization of viral envelopment factors UL34 and UL31.</title>
        <authorList>
            <person name="Kato A."/>
            <person name="Yamamoto M."/>
            <person name="Ohno T."/>
            <person name="Tanaka M."/>
            <person name="Sata T."/>
            <person name="Nishiyama Y."/>
            <person name="Kawaguchi Y."/>
        </authorList>
    </citation>
    <scope>SUBCELLULAR LOCATION</scope>
</reference>
<reference key="10">
    <citation type="journal article" date="2006" name="J. Virol.">
        <title>Common and specific properties of herpesvirus UL34/UL31 protein family members revealed by protein complementation assay.</title>
        <authorList>
            <person name="Schnee M."/>
            <person name="Ruzsics Z."/>
            <person name="Bubeck A."/>
            <person name="Koszinowski U.H."/>
        </authorList>
    </citation>
    <scope>INTERACTION WITH NEC1</scope>
</reference>
<reference key="11">
    <citation type="journal article" date="2009" name="J. Virol.">
        <title>The U(L)31 and U(L)34 gene products of herpes simplex virus 1 are required for optimal localization of viral glycoproteins D and M to the inner nuclear membranes of infected cells.</title>
        <authorList>
            <person name="Wills E."/>
            <person name="Mou F."/>
            <person name="Baines J.D."/>
        </authorList>
    </citation>
    <scope>INTERACTION WITH GLYCOPROTEIN D</scope>
</reference>
<reference key="12">
    <citation type="journal article" date="2015" name="EMBO J.">
        <title>Structural basis of membrane budding by the nuclear egress complex of herpesviruses.</title>
        <authorList>
            <person name="Bigalke J.M."/>
            <person name="Heldwein E.E."/>
        </authorList>
    </citation>
    <scope>X-RAY CRYSTALLOGRAPHY (2.77 ANGSTROMS) OF 15-185</scope>
    <scope>SUBUNIT</scope>
</reference>
<organism>
    <name type="scientific">Human herpesvirus 1 (strain 17)</name>
    <name type="common">HHV-1</name>
    <name type="synonym">Human herpes simplex virus 1</name>
    <dbReference type="NCBI Taxonomy" id="10299"/>
    <lineage>
        <taxon>Viruses</taxon>
        <taxon>Duplodnaviria</taxon>
        <taxon>Heunggongvirae</taxon>
        <taxon>Peploviricota</taxon>
        <taxon>Herviviricetes</taxon>
        <taxon>Herpesvirales</taxon>
        <taxon>Orthoherpesviridae</taxon>
        <taxon>Alphaherpesvirinae</taxon>
        <taxon>Simplexvirus</taxon>
        <taxon>Simplexvirus humanalpha1</taxon>
        <taxon>Human herpesvirus 1</taxon>
    </lineage>
</organism>